<keyword id="KW-0150">Chloroplast</keyword>
<keyword id="KW-0472">Membrane</keyword>
<keyword id="KW-0602">Photosynthesis</keyword>
<keyword id="KW-0934">Plastid</keyword>
<keyword id="KW-0677">Repeat</keyword>
<keyword id="KW-0793">Thylakoid</keyword>
<keyword id="KW-0802">TPR repeat</keyword>
<name>YCF3_PLALA</name>
<protein>
    <recommendedName>
        <fullName evidence="1">Photosystem I assembly protein Ycf3</fullName>
    </recommendedName>
</protein>
<evidence type="ECO:0000255" key="1">
    <source>
        <dbReference type="HAMAP-Rule" id="MF_00439"/>
    </source>
</evidence>
<organism>
    <name type="scientific">Plantago lanceolata</name>
    <name type="common">English plantain</name>
    <name type="synonym">Ribwort plantain</name>
    <dbReference type="NCBI Taxonomy" id="39414"/>
    <lineage>
        <taxon>Eukaryota</taxon>
        <taxon>Viridiplantae</taxon>
        <taxon>Streptophyta</taxon>
        <taxon>Embryophyta</taxon>
        <taxon>Tracheophyta</taxon>
        <taxon>Spermatophyta</taxon>
        <taxon>Magnoliopsida</taxon>
        <taxon>eudicotyledons</taxon>
        <taxon>Gunneridae</taxon>
        <taxon>Pentapetalae</taxon>
        <taxon>asterids</taxon>
        <taxon>lamiids</taxon>
        <taxon>Lamiales</taxon>
        <taxon>Plantaginaceae</taxon>
        <taxon>Plantagineae</taxon>
        <taxon>Plantago</taxon>
    </lineage>
</organism>
<sequence length="168" mass="19550">MSRSRTNGNFIDKTFSIVANILLQIIPTTSGEKEAFTYYRDGMSAQSEGNYAEALQNYYEAMRLEMDPYDRSYILYNIGLIHTSNGEHTKALEYYFRALERNPFLPQAFNNMAVICHYRGEQAVREGDSEIAEAWFDQAAEYWKQAIALTPGNYIEAHNWLKITRRFE</sequence>
<gene>
    <name evidence="1" type="primary">ycf3</name>
</gene>
<dbReference type="EMBL" id="AY818920">
    <property type="protein sequence ID" value="AAW33066.1"/>
    <property type="molecule type" value="Genomic_DNA"/>
</dbReference>
<dbReference type="RefSeq" id="YP_010544707.1">
    <property type="nucleotide sequence ID" value="NC_068049.1"/>
</dbReference>
<dbReference type="SMR" id="Q5IBL2"/>
<dbReference type="GeneID" id="76359060"/>
<dbReference type="GO" id="GO:0009535">
    <property type="term" value="C:chloroplast thylakoid membrane"/>
    <property type="evidence" value="ECO:0007669"/>
    <property type="project" value="UniProtKB-SubCell"/>
</dbReference>
<dbReference type="GO" id="GO:0015979">
    <property type="term" value="P:photosynthesis"/>
    <property type="evidence" value="ECO:0007669"/>
    <property type="project" value="UniProtKB-UniRule"/>
</dbReference>
<dbReference type="FunFam" id="1.25.40.10:FF:000004">
    <property type="entry name" value="Photosystem I assembly protein Ycf3"/>
    <property type="match status" value="1"/>
</dbReference>
<dbReference type="Gene3D" id="1.25.40.10">
    <property type="entry name" value="Tetratricopeptide repeat domain"/>
    <property type="match status" value="1"/>
</dbReference>
<dbReference type="HAMAP" id="MF_00439">
    <property type="entry name" value="Ycf3"/>
    <property type="match status" value="1"/>
</dbReference>
<dbReference type="InterPro" id="IPR022818">
    <property type="entry name" value="PSI_Ycf3_assembly"/>
</dbReference>
<dbReference type="InterPro" id="IPR011990">
    <property type="entry name" value="TPR-like_helical_dom_sf"/>
</dbReference>
<dbReference type="InterPro" id="IPR019734">
    <property type="entry name" value="TPR_rpt"/>
</dbReference>
<dbReference type="InterPro" id="IPR051685">
    <property type="entry name" value="Ycf3/AcsC/BcsC/TPR_MFPF"/>
</dbReference>
<dbReference type="NCBIfam" id="NF002725">
    <property type="entry name" value="PRK02603.1"/>
    <property type="match status" value="1"/>
</dbReference>
<dbReference type="PANTHER" id="PTHR44943">
    <property type="entry name" value="CELLULOSE SYNTHASE OPERON PROTEIN C"/>
    <property type="match status" value="1"/>
</dbReference>
<dbReference type="PANTHER" id="PTHR44943:SF8">
    <property type="entry name" value="TPR REPEAT-CONTAINING PROTEIN MJ0263"/>
    <property type="match status" value="1"/>
</dbReference>
<dbReference type="Pfam" id="PF00515">
    <property type="entry name" value="TPR_1"/>
    <property type="match status" value="1"/>
</dbReference>
<dbReference type="SMART" id="SM00028">
    <property type="entry name" value="TPR"/>
    <property type="match status" value="3"/>
</dbReference>
<dbReference type="SUPFAM" id="SSF48452">
    <property type="entry name" value="TPR-like"/>
    <property type="match status" value="1"/>
</dbReference>
<dbReference type="PROSITE" id="PS50005">
    <property type="entry name" value="TPR"/>
    <property type="match status" value="3"/>
</dbReference>
<dbReference type="PROSITE" id="PS50293">
    <property type="entry name" value="TPR_REGION"/>
    <property type="match status" value="1"/>
</dbReference>
<comment type="function">
    <text evidence="1">Essential for the assembly of the photosystem I (PSI) complex. May act as a chaperone-like factor to guide the assembly of the PSI subunits.</text>
</comment>
<comment type="subcellular location">
    <subcellularLocation>
        <location evidence="1">Plastid</location>
        <location evidence="1">Chloroplast thylakoid membrane</location>
        <topology evidence="1">Peripheral membrane protein</topology>
    </subcellularLocation>
</comment>
<comment type="similarity">
    <text evidence="1">Belongs to the Ycf3 family.</text>
</comment>
<reference key="1">
    <citation type="journal article" date="2004" name="Proc. Natl. Acad. Sci. U.S.A.">
        <title>Mitochondrial substitution rates are extraordinarily elevated and variable in a genus of flowering plants.</title>
        <authorList>
            <person name="Cho Y."/>
            <person name="Mower J.P."/>
            <person name="Qiu Y.L."/>
            <person name="Palmer J.D."/>
        </authorList>
    </citation>
    <scope>NUCLEOTIDE SEQUENCE [GENOMIC DNA]</scope>
</reference>
<feature type="chain" id="PRO_0000217819" description="Photosystem I assembly protein Ycf3">
    <location>
        <begin position="1"/>
        <end position="168"/>
    </location>
</feature>
<feature type="repeat" description="TPR 1">
    <location>
        <begin position="35"/>
        <end position="68"/>
    </location>
</feature>
<feature type="repeat" description="TPR 2">
    <location>
        <begin position="72"/>
        <end position="105"/>
    </location>
</feature>
<feature type="repeat" description="TPR 3">
    <location>
        <begin position="120"/>
        <end position="153"/>
    </location>
</feature>
<accession>Q5IBL2</accession>
<geneLocation type="chloroplast"/>
<proteinExistence type="inferred from homology"/>